<protein>
    <recommendedName>
        <fullName evidence="1">Putative pre-16S rRNA nuclease</fullName>
        <ecNumber evidence="1">3.1.-.-</ecNumber>
    </recommendedName>
</protein>
<feature type="chain" id="PRO_0000172152" description="Putative pre-16S rRNA nuclease">
    <location>
        <begin position="1"/>
        <end position="139"/>
    </location>
</feature>
<gene>
    <name type="ordered locus">SpyM3_1797</name>
</gene>
<comment type="function">
    <text evidence="1">Could be a nuclease involved in processing of the 5'-end of pre-16S rRNA.</text>
</comment>
<comment type="subcellular location">
    <subcellularLocation>
        <location evidence="1">Cytoplasm</location>
    </subcellularLocation>
</comment>
<comment type="similarity">
    <text evidence="1">Belongs to the YqgF nuclease family.</text>
</comment>
<comment type="sequence caution" evidence="2">
    <conflict type="erroneous initiation">
        <sequence resource="EMBL-CDS" id="AAM80404"/>
    </conflict>
    <text>Truncated N-terminus.</text>
</comment>
<name>YQGF_STRP3</name>
<dbReference type="EC" id="3.1.-.-" evidence="1"/>
<dbReference type="EMBL" id="AE014074">
    <property type="protein sequence ID" value="AAM80404.1"/>
    <property type="status" value="ALT_INIT"/>
    <property type="molecule type" value="Genomic_DNA"/>
</dbReference>
<dbReference type="SMR" id="P0DF52"/>
<dbReference type="KEGG" id="spg:SpyM3_1797"/>
<dbReference type="HOGENOM" id="CLU_098240_2_0_9"/>
<dbReference type="Proteomes" id="UP000000564">
    <property type="component" value="Chromosome"/>
</dbReference>
<dbReference type="GO" id="GO:0005829">
    <property type="term" value="C:cytosol"/>
    <property type="evidence" value="ECO:0007669"/>
    <property type="project" value="TreeGrafter"/>
</dbReference>
<dbReference type="GO" id="GO:0004518">
    <property type="term" value="F:nuclease activity"/>
    <property type="evidence" value="ECO:0007669"/>
    <property type="project" value="UniProtKB-KW"/>
</dbReference>
<dbReference type="GO" id="GO:0000967">
    <property type="term" value="P:rRNA 5'-end processing"/>
    <property type="evidence" value="ECO:0007669"/>
    <property type="project" value="UniProtKB-UniRule"/>
</dbReference>
<dbReference type="CDD" id="cd16964">
    <property type="entry name" value="YqgF"/>
    <property type="match status" value="1"/>
</dbReference>
<dbReference type="FunFam" id="3.30.420.140:FF:000003">
    <property type="entry name" value="Putative pre-16S rRNA nuclease"/>
    <property type="match status" value="1"/>
</dbReference>
<dbReference type="Gene3D" id="3.30.420.140">
    <property type="entry name" value="YqgF/RNase H-like domain"/>
    <property type="match status" value="1"/>
</dbReference>
<dbReference type="HAMAP" id="MF_00651">
    <property type="entry name" value="Nuclease_YqgF"/>
    <property type="match status" value="1"/>
</dbReference>
<dbReference type="InterPro" id="IPR012337">
    <property type="entry name" value="RNaseH-like_sf"/>
</dbReference>
<dbReference type="InterPro" id="IPR005227">
    <property type="entry name" value="YqgF"/>
</dbReference>
<dbReference type="InterPro" id="IPR006641">
    <property type="entry name" value="YqgF/RNaseH-like_dom"/>
</dbReference>
<dbReference type="InterPro" id="IPR037027">
    <property type="entry name" value="YqgF/RNaseH-like_dom_sf"/>
</dbReference>
<dbReference type="NCBIfam" id="TIGR00250">
    <property type="entry name" value="RNAse_H_YqgF"/>
    <property type="match status" value="1"/>
</dbReference>
<dbReference type="PANTHER" id="PTHR33317">
    <property type="entry name" value="POLYNUCLEOTIDYL TRANSFERASE, RIBONUCLEASE H-LIKE SUPERFAMILY PROTEIN"/>
    <property type="match status" value="1"/>
</dbReference>
<dbReference type="PANTHER" id="PTHR33317:SF4">
    <property type="entry name" value="POLYNUCLEOTIDYL TRANSFERASE, RIBONUCLEASE H-LIKE SUPERFAMILY PROTEIN"/>
    <property type="match status" value="1"/>
</dbReference>
<dbReference type="Pfam" id="PF03652">
    <property type="entry name" value="RuvX"/>
    <property type="match status" value="1"/>
</dbReference>
<dbReference type="SMART" id="SM00732">
    <property type="entry name" value="YqgFc"/>
    <property type="match status" value="1"/>
</dbReference>
<dbReference type="SUPFAM" id="SSF53098">
    <property type="entry name" value="Ribonuclease H-like"/>
    <property type="match status" value="1"/>
</dbReference>
<sequence>MRIMGLDVGSKTVGVAISDPLGFTAQGLEIIKIDEEKAEFGFTRLEELVKQYQVEQFVIGLPKNMNNTNGPRVDASITYGNHIEHLFGLPVHYQDERLTTVEAERMLIEQADISRGKRKKVIDKLAAQLILQNYLNRNF</sequence>
<reference key="1">
    <citation type="journal article" date="2002" name="Proc. Natl. Acad. Sci. U.S.A.">
        <title>Genome sequence of a serotype M3 strain of group A Streptococcus: phage-encoded toxins, the high-virulence phenotype, and clone emergence.</title>
        <authorList>
            <person name="Beres S.B."/>
            <person name="Sylva G.L."/>
            <person name="Barbian K.D."/>
            <person name="Lei B."/>
            <person name="Hoff J.S."/>
            <person name="Mammarella N.D."/>
            <person name="Liu M.-Y."/>
            <person name="Smoot J.C."/>
            <person name="Porcella S.F."/>
            <person name="Parkins L.D."/>
            <person name="Campbell D.S."/>
            <person name="Smith T.M."/>
            <person name="McCormick J.K."/>
            <person name="Leung D.Y.M."/>
            <person name="Schlievert P.M."/>
            <person name="Musser J.M."/>
        </authorList>
    </citation>
    <scope>NUCLEOTIDE SEQUENCE [LARGE SCALE GENOMIC DNA]</scope>
    <source>
        <strain>ATCC BAA-595 / MGAS315</strain>
    </source>
</reference>
<evidence type="ECO:0000255" key="1">
    <source>
        <dbReference type="HAMAP-Rule" id="MF_00651"/>
    </source>
</evidence>
<evidence type="ECO:0000305" key="2"/>
<accession>P0DF52</accession>
<accession>P67494</accession>
<accession>Q877W9</accession>
<accession>Q8K5K1</accession>
<accession>Q8NZ31</accession>
<organism>
    <name type="scientific">Streptococcus pyogenes serotype M3 (strain ATCC BAA-595 / MGAS315)</name>
    <dbReference type="NCBI Taxonomy" id="198466"/>
    <lineage>
        <taxon>Bacteria</taxon>
        <taxon>Bacillati</taxon>
        <taxon>Bacillota</taxon>
        <taxon>Bacilli</taxon>
        <taxon>Lactobacillales</taxon>
        <taxon>Streptococcaceae</taxon>
        <taxon>Streptococcus</taxon>
    </lineage>
</organism>
<proteinExistence type="inferred from homology"/>
<keyword id="KW-0963">Cytoplasm</keyword>
<keyword id="KW-0378">Hydrolase</keyword>
<keyword id="KW-0540">Nuclease</keyword>
<keyword id="KW-0690">Ribosome biogenesis</keyword>